<organism>
    <name type="scientific">Oryza sativa subsp. japonica</name>
    <name type="common">Rice</name>
    <dbReference type="NCBI Taxonomy" id="39947"/>
    <lineage>
        <taxon>Eukaryota</taxon>
        <taxon>Viridiplantae</taxon>
        <taxon>Streptophyta</taxon>
        <taxon>Embryophyta</taxon>
        <taxon>Tracheophyta</taxon>
        <taxon>Spermatophyta</taxon>
        <taxon>Magnoliopsida</taxon>
        <taxon>Liliopsida</taxon>
        <taxon>Poales</taxon>
        <taxon>Poaceae</taxon>
        <taxon>BOP clade</taxon>
        <taxon>Oryzoideae</taxon>
        <taxon>Oryzeae</taxon>
        <taxon>Oryzinae</taxon>
        <taxon>Oryza</taxon>
        <taxon>Oryza sativa</taxon>
    </lineage>
</organism>
<dbReference type="EMBL" id="AC112209">
    <property type="protein sequence ID" value="AAX92717.1"/>
    <property type="status" value="ALT_SEQ"/>
    <property type="molecule type" value="Genomic_DNA"/>
</dbReference>
<dbReference type="EMBL" id="AC112209">
    <property type="protein sequence ID" value="AAX92718.1"/>
    <property type="molecule type" value="Genomic_DNA"/>
</dbReference>
<dbReference type="EMBL" id="AC134048">
    <property type="protein sequence ID" value="AAX92951.1"/>
    <property type="status" value="ALT_SEQ"/>
    <property type="molecule type" value="Genomic_DNA"/>
</dbReference>
<dbReference type="EMBL" id="DP000010">
    <property type="protein sequence ID" value="ABA91538.2"/>
    <property type="molecule type" value="Genomic_DNA"/>
</dbReference>
<dbReference type="EMBL" id="AP008217">
    <property type="protein sequence ID" value="BAF27637.1"/>
    <property type="molecule type" value="Genomic_DNA"/>
</dbReference>
<dbReference type="EMBL" id="AP014967">
    <property type="protein sequence ID" value="BAT12756.1"/>
    <property type="molecule type" value="Genomic_DNA"/>
</dbReference>
<dbReference type="EMBL" id="AK070487">
    <property type="protein sequence ID" value="BAG91982.1"/>
    <property type="molecule type" value="mRNA"/>
</dbReference>
<dbReference type="RefSeq" id="XP_015615108.1">
    <property type="nucleotide sequence ID" value="XM_015759622.1"/>
</dbReference>
<dbReference type="SMR" id="Q53QI0"/>
<dbReference type="FunCoup" id="Q53QI0">
    <property type="interactions" value="615"/>
</dbReference>
<dbReference type="PaxDb" id="39947-Q53QI0"/>
<dbReference type="EnsemblPlants" id="Os11t0156000-01">
    <property type="protein sequence ID" value="Os11t0156000-01"/>
    <property type="gene ID" value="Os11g0156000"/>
</dbReference>
<dbReference type="Gramene" id="Os11t0156000-01">
    <property type="protein sequence ID" value="Os11t0156000-01"/>
    <property type="gene ID" value="Os11g0156000"/>
</dbReference>
<dbReference type="KEGG" id="dosa:Os11g0156000"/>
<dbReference type="eggNOG" id="ENOG502R9U7">
    <property type="taxonomic scope" value="Eukaryota"/>
</dbReference>
<dbReference type="InParanoid" id="Q53QI0"/>
<dbReference type="OMA" id="SHAYRCS"/>
<dbReference type="OrthoDB" id="2020802at2759"/>
<dbReference type="Proteomes" id="UP000000763">
    <property type="component" value="Chromosome 11"/>
</dbReference>
<dbReference type="Proteomes" id="UP000059680">
    <property type="component" value="Chromosome 11"/>
</dbReference>
<dbReference type="ExpressionAtlas" id="Q53QI0">
    <property type="expression patterns" value="baseline and differential"/>
</dbReference>
<dbReference type="GO" id="GO:0005634">
    <property type="term" value="C:nucleus"/>
    <property type="evidence" value="ECO:0007669"/>
    <property type="project" value="UniProtKB-SubCell"/>
</dbReference>
<dbReference type="GO" id="GO:0003677">
    <property type="term" value="F:DNA binding"/>
    <property type="evidence" value="ECO:0007669"/>
    <property type="project" value="UniProtKB-KW"/>
</dbReference>
<dbReference type="GO" id="GO:0003700">
    <property type="term" value="F:DNA-binding transcription factor activity"/>
    <property type="evidence" value="ECO:0007669"/>
    <property type="project" value="InterPro"/>
</dbReference>
<dbReference type="CDD" id="cd10017">
    <property type="entry name" value="B3_DNA"/>
    <property type="match status" value="1"/>
</dbReference>
<dbReference type="Gene3D" id="2.40.330.10">
    <property type="entry name" value="DNA-binding pseudobarrel domain"/>
    <property type="match status" value="1"/>
</dbReference>
<dbReference type="InterPro" id="IPR003340">
    <property type="entry name" value="B3_DNA-bd"/>
</dbReference>
<dbReference type="InterPro" id="IPR015300">
    <property type="entry name" value="DNA-bd_pseudobarrel_sf"/>
</dbReference>
<dbReference type="InterPro" id="IPR044800">
    <property type="entry name" value="LEC2-like"/>
</dbReference>
<dbReference type="PANTHER" id="PTHR31140:SF70">
    <property type="entry name" value="B3 DOMAIN-CONTAINING PROTEIN OS11G0156000"/>
    <property type="match status" value="1"/>
</dbReference>
<dbReference type="PANTHER" id="PTHR31140">
    <property type="entry name" value="B3 DOMAIN-CONTAINING TRANSCRIPTION FACTOR ABI3"/>
    <property type="match status" value="1"/>
</dbReference>
<dbReference type="Pfam" id="PF02362">
    <property type="entry name" value="B3"/>
    <property type="match status" value="1"/>
</dbReference>
<dbReference type="SMART" id="SM01019">
    <property type="entry name" value="B3"/>
    <property type="match status" value="1"/>
</dbReference>
<dbReference type="SUPFAM" id="SSF101936">
    <property type="entry name" value="DNA-binding pseudobarrel domain"/>
    <property type="match status" value="1"/>
</dbReference>
<dbReference type="PROSITE" id="PS50863">
    <property type="entry name" value="B3"/>
    <property type="match status" value="1"/>
</dbReference>
<accession>Q53QI0</accession>
<accession>A0A0P0XYX5</accession>
<accession>Q53NE4</accession>
<comment type="subcellular location">
    <subcellularLocation>
        <location evidence="1">Nucleus</location>
    </subcellularLocation>
</comment>
<comment type="sequence caution" evidence="3">
    <conflict type="erroneous gene model prediction">
        <sequence resource="EMBL-CDS" id="AAX92717"/>
    </conflict>
</comment>
<comment type="sequence caution" evidence="3">
    <conflict type="erroneous gene model prediction">
        <sequence resource="EMBL-CDS" id="AAX92951"/>
    </conflict>
</comment>
<name>Y1160_ORYSJ</name>
<keyword id="KW-0238">DNA-binding</keyword>
<keyword id="KW-0539">Nucleus</keyword>
<keyword id="KW-1185">Reference proteome</keyword>
<keyword id="KW-0804">Transcription</keyword>
<keyword id="KW-0805">Transcription regulation</keyword>
<feature type="chain" id="PRO_0000376989" description="B3 domain-containing protein Os11g0156000">
    <location>
        <begin position="1"/>
        <end position="279"/>
    </location>
</feature>
<feature type="DNA-binding region" description="TF-B3" evidence="1">
    <location>
        <begin position="38"/>
        <end position="144"/>
    </location>
</feature>
<feature type="region of interest" description="Disordered" evidence="2">
    <location>
        <begin position="148"/>
        <end position="182"/>
    </location>
</feature>
<feature type="region of interest" description="Disordered" evidence="2">
    <location>
        <begin position="203"/>
        <end position="228"/>
    </location>
</feature>
<feature type="compositionally biased region" description="Low complexity" evidence="2">
    <location>
        <begin position="159"/>
        <end position="168"/>
    </location>
</feature>
<feature type="compositionally biased region" description="Basic and acidic residues" evidence="2">
    <location>
        <begin position="203"/>
        <end position="219"/>
    </location>
</feature>
<sequence>MAMNHPLFSQEQPQSWPWGVAMYANFHYHHHYEKEHMFEKPLTPSDVGKLNRLVIPKQHAERYFPLGAGDAADKGLILSFEDEAGAPWRFRYSYWTSSQSYVLTKGWSRYVKEKRLDAGDVVHFERVRGSFGVGDRLFIGCRRRGDAAAAQTPAPPPAVRVAPAAQNAGEQQPWSPMCYSTSGGGSYPTSPANSYAYRRAADHDHGDMHHADESPRDTDSPSFSAGSAPSRRLRLFGVNLDCGPEPEADTTAAATMYGYMHQQSSYAAMSAVPSYWGNS</sequence>
<reference key="1">
    <citation type="journal article" date="2005" name="BMC Biol.">
        <title>The sequence of rice chromosomes 11 and 12, rich in disease resistance genes and recent gene duplications.</title>
        <authorList>
            <consortium name="The rice chromosomes 11 and 12 sequencing consortia"/>
        </authorList>
    </citation>
    <scope>NUCLEOTIDE SEQUENCE [LARGE SCALE GENOMIC DNA]</scope>
    <source>
        <strain>cv. Nipponbare</strain>
    </source>
</reference>
<reference key="2">
    <citation type="journal article" date="2005" name="Nature">
        <title>The map-based sequence of the rice genome.</title>
        <authorList>
            <consortium name="International rice genome sequencing project (IRGSP)"/>
        </authorList>
    </citation>
    <scope>NUCLEOTIDE SEQUENCE [LARGE SCALE GENOMIC DNA]</scope>
    <source>
        <strain>cv. Nipponbare</strain>
    </source>
</reference>
<reference key="3">
    <citation type="journal article" date="2008" name="Nucleic Acids Res.">
        <title>The rice annotation project database (RAP-DB): 2008 update.</title>
        <authorList>
            <consortium name="The rice annotation project (RAP)"/>
        </authorList>
    </citation>
    <scope>GENOME REANNOTATION</scope>
    <source>
        <strain>cv. Nipponbare</strain>
    </source>
</reference>
<reference key="4">
    <citation type="journal article" date="2013" name="Rice">
        <title>Improvement of the Oryza sativa Nipponbare reference genome using next generation sequence and optical map data.</title>
        <authorList>
            <person name="Kawahara Y."/>
            <person name="de la Bastide M."/>
            <person name="Hamilton J.P."/>
            <person name="Kanamori H."/>
            <person name="McCombie W.R."/>
            <person name="Ouyang S."/>
            <person name="Schwartz D.C."/>
            <person name="Tanaka T."/>
            <person name="Wu J."/>
            <person name="Zhou S."/>
            <person name="Childs K.L."/>
            <person name="Davidson R.M."/>
            <person name="Lin H."/>
            <person name="Quesada-Ocampo L."/>
            <person name="Vaillancourt B."/>
            <person name="Sakai H."/>
            <person name="Lee S.S."/>
            <person name="Kim J."/>
            <person name="Numa H."/>
            <person name="Itoh T."/>
            <person name="Buell C.R."/>
            <person name="Matsumoto T."/>
        </authorList>
    </citation>
    <scope>GENOME REANNOTATION</scope>
    <source>
        <strain>cv. Nipponbare</strain>
    </source>
</reference>
<reference key="5">
    <citation type="journal article" date="2003" name="Science">
        <title>Collection, mapping, and annotation of over 28,000 cDNA clones from japonica rice.</title>
        <authorList>
            <consortium name="The rice full-length cDNA consortium"/>
        </authorList>
    </citation>
    <scope>NUCLEOTIDE SEQUENCE [LARGE SCALE MRNA]</scope>
    <source>
        <strain>cv. Nipponbare</strain>
    </source>
</reference>
<protein>
    <recommendedName>
        <fullName>B3 domain-containing protein Os11g0156000</fullName>
    </recommendedName>
</protein>
<gene>
    <name type="ordered locus">Os11g0156000</name>
    <name type="ordered locus">LOC_Os11g05740</name>
</gene>
<proteinExistence type="evidence at transcript level"/>
<evidence type="ECO:0000255" key="1">
    <source>
        <dbReference type="PROSITE-ProRule" id="PRU00326"/>
    </source>
</evidence>
<evidence type="ECO:0000256" key="2">
    <source>
        <dbReference type="SAM" id="MobiDB-lite"/>
    </source>
</evidence>
<evidence type="ECO:0000305" key="3"/>